<accession>A3N249</accession>
<gene>
    <name evidence="2" type="primary">rpsL</name>
    <name type="ordered locus">APL_1401</name>
</gene>
<organism>
    <name type="scientific">Actinobacillus pleuropneumoniae serotype 5b (strain L20)</name>
    <dbReference type="NCBI Taxonomy" id="416269"/>
    <lineage>
        <taxon>Bacteria</taxon>
        <taxon>Pseudomonadati</taxon>
        <taxon>Pseudomonadota</taxon>
        <taxon>Gammaproteobacteria</taxon>
        <taxon>Pasteurellales</taxon>
        <taxon>Pasteurellaceae</taxon>
        <taxon>Actinobacillus</taxon>
    </lineage>
</organism>
<feature type="chain" id="PRO_0000295946" description="Small ribosomal subunit protein uS12">
    <location>
        <begin position="1"/>
        <end position="124"/>
    </location>
</feature>
<feature type="modified residue" description="3-methylthioaspartic acid" evidence="1">
    <location>
        <position position="89"/>
    </location>
</feature>
<sequence>MATINQLVRKPRVKKVVKSNVPALEACPQKRGVCTRVYTTTPKKPNSALRKVCRIRLTNGFEVTSYIGGEGHNLQEHSVVLIRGGRVKDLPGVRYHTVRGALDCAGVKDRKQGRSKYGVKRPKA</sequence>
<keyword id="KW-0488">Methylation</keyword>
<keyword id="KW-1185">Reference proteome</keyword>
<keyword id="KW-0687">Ribonucleoprotein</keyword>
<keyword id="KW-0689">Ribosomal protein</keyword>
<keyword id="KW-0694">RNA-binding</keyword>
<keyword id="KW-0699">rRNA-binding</keyword>
<keyword id="KW-0820">tRNA-binding</keyword>
<name>RS12_ACTP2</name>
<proteinExistence type="inferred from homology"/>
<evidence type="ECO:0000250" key="1"/>
<evidence type="ECO:0000255" key="2">
    <source>
        <dbReference type="HAMAP-Rule" id="MF_00403"/>
    </source>
</evidence>
<evidence type="ECO:0000305" key="3"/>
<reference key="1">
    <citation type="journal article" date="2008" name="J. Bacteriol.">
        <title>The complete genome sequence of Actinobacillus pleuropneumoniae L20 (serotype 5b).</title>
        <authorList>
            <person name="Foote S.J."/>
            <person name="Bosse J.T."/>
            <person name="Bouevitch A.B."/>
            <person name="Langford P.R."/>
            <person name="Young N.M."/>
            <person name="Nash J.H.E."/>
        </authorList>
    </citation>
    <scope>NUCLEOTIDE SEQUENCE [LARGE SCALE GENOMIC DNA]</scope>
    <source>
        <strain>L20</strain>
    </source>
</reference>
<protein>
    <recommendedName>
        <fullName evidence="2">Small ribosomal subunit protein uS12</fullName>
    </recommendedName>
    <alternativeName>
        <fullName evidence="3">30S ribosomal protein S12</fullName>
    </alternativeName>
</protein>
<dbReference type="EMBL" id="CP000569">
    <property type="protein sequence ID" value="ABN74485.1"/>
    <property type="molecule type" value="Genomic_DNA"/>
</dbReference>
<dbReference type="RefSeq" id="WP_005543325.1">
    <property type="nucleotide sequence ID" value="NC_009053.1"/>
</dbReference>
<dbReference type="SMR" id="A3N249"/>
<dbReference type="STRING" id="416269.APL_1401"/>
<dbReference type="EnsemblBacteria" id="ABN74485">
    <property type="protein sequence ID" value="ABN74485"/>
    <property type="gene ID" value="APL_1401"/>
</dbReference>
<dbReference type="GeneID" id="93298548"/>
<dbReference type="KEGG" id="apl:APL_1401"/>
<dbReference type="eggNOG" id="COG0048">
    <property type="taxonomic scope" value="Bacteria"/>
</dbReference>
<dbReference type="HOGENOM" id="CLU_104295_1_2_6"/>
<dbReference type="Proteomes" id="UP000001432">
    <property type="component" value="Chromosome"/>
</dbReference>
<dbReference type="GO" id="GO:0015935">
    <property type="term" value="C:small ribosomal subunit"/>
    <property type="evidence" value="ECO:0007669"/>
    <property type="project" value="InterPro"/>
</dbReference>
<dbReference type="GO" id="GO:0019843">
    <property type="term" value="F:rRNA binding"/>
    <property type="evidence" value="ECO:0007669"/>
    <property type="project" value="UniProtKB-UniRule"/>
</dbReference>
<dbReference type="GO" id="GO:0003735">
    <property type="term" value="F:structural constituent of ribosome"/>
    <property type="evidence" value="ECO:0007669"/>
    <property type="project" value="InterPro"/>
</dbReference>
<dbReference type="GO" id="GO:0000049">
    <property type="term" value="F:tRNA binding"/>
    <property type="evidence" value="ECO:0007669"/>
    <property type="project" value="UniProtKB-UniRule"/>
</dbReference>
<dbReference type="GO" id="GO:0006412">
    <property type="term" value="P:translation"/>
    <property type="evidence" value="ECO:0007669"/>
    <property type="project" value="UniProtKB-UniRule"/>
</dbReference>
<dbReference type="CDD" id="cd03368">
    <property type="entry name" value="Ribosomal_S12"/>
    <property type="match status" value="1"/>
</dbReference>
<dbReference type="FunFam" id="2.40.50.140:FF:000001">
    <property type="entry name" value="30S ribosomal protein S12"/>
    <property type="match status" value="1"/>
</dbReference>
<dbReference type="Gene3D" id="2.40.50.140">
    <property type="entry name" value="Nucleic acid-binding proteins"/>
    <property type="match status" value="1"/>
</dbReference>
<dbReference type="HAMAP" id="MF_00403_B">
    <property type="entry name" value="Ribosomal_uS12_B"/>
    <property type="match status" value="1"/>
</dbReference>
<dbReference type="InterPro" id="IPR012340">
    <property type="entry name" value="NA-bd_OB-fold"/>
</dbReference>
<dbReference type="InterPro" id="IPR006032">
    <property type="entry name" value="Ribosomal_uS12"/>
</dbReference>
<dbReference type="InterPro" id="IPR005679">
    <property type="entry name" value="Ribosomal_uS12_bac"/>
</dbReference>
<dbReference type="NCBIfam" id="TIGR00981">
    <property type="entry name" value="rpsL_bact"/>
    <property type="match status" value="1"/>
</dbReference>
<dbReference type="PANTHER" id="PTHR11652">
    <property type="entry name" value="30S RIBOSOMAL PROTEIN S12 FAMILY MEMBER"/>
    <property type="match status" value="1"/>
</dbReference>
<dbReference type="Pfam" id="PF00164">
    <property type="entry name" value="Ribosom_S12_S23"/>
    <property type="match status" value="1"/>
</dbReference>
<dbReference type="PIRSF" id="PIRSF002133">
    <property type="entry name" value="Ribosomal_S12/S23"/>
    <property type="match status" value="1"/>
</dbReference>
<dbReference type="PRINTS" id="PR01034">
    <property type="entry name" value="RIBOSOMALS12"/>
</dbReference>
<dbReference type="SUPFAM" id="SSF50249">
    <property type="entry name" value="Nucleic acid-binding proteins"/>
    <property type="match status" value="1"/>
</dbReference>
<dbReference type="PROSITE" id="PS00055">
    <property type="entry name" value="RIBOSOMAL_S12"/>
    <property type="match status" value="1"/>
</dbReference>
<comment type="function">
    <text evidence="2">With S4 and S5 plays an important role in translational accuracy.</text>
</comment>
<comment type="function">
    <text evidence="2">Interacts with and stabilizes bases of the 16S rRNA that are involved in tRNA selection in the A site and with the mRNA backbone. Located at the interface of the 30S and 50S subunits, it traverses the body of the 30S subunit contacting proteins on the other side and probably holding the rRNA structure together. The combined cluster of proteins S8, S12 and S17 appears to hold together the shoulder and platform of the 30S subunit.</text>
</comment>
<comment type="subunit">
    <text evidence="2">Part of the 30S ribosomal subunit. Contacts proteins S8 and S17. May interact with IF1 in the 30S initiation complex.</text>
</comment>
<comment type="similarity">
    <text evidence="2">Belongs to the universal ribosomal protein uS12 family.</text>
</comment>